<reference key="1">
    <citation type="journal article" date="1999" name="DNA Res.">
        <title>Complete structure of the chloroplast genome of Arabidopsis thaliana.</title>
        <authorList>
            <person name="Sato S."/>
            <person name="Nakamura Y."/>
            <person name="Kaneko T."/>
            <person name="Asamizu E."/>
            <person name="Tabata S."/>
        </authorList>
    </citation>
    <scope>NUCLEOTIDE SEQUENCE [LARGE SCALE GENOMIC DNA]</scope>
    <source>
        <strain>cv. Columbia</strain>
    </source>
</reference>
<reference key="2">
    <citation type="journal article" date="2005" name="Plant J.">
        <title>Editing of plastid RNA in Arabidopsis thaliana ecotypes.</title>
        <authorList>
            <person name="Tillich M."/>
            <person name="Funk H.T."/>
            <person name="Schmitz-Linneweber C."/>
            <person name="Poltnigg P."/>
            <person name="Sabater B."/>
            <person name="Martin M."/>
            <person name="Maier R.M."/>
        </authorList>
    </citation>
    <scope>NUCLEOTIDE SEQUENCE [GENOMIC DNA]</scope>
    <scope>RNA EDITING</scope>
    <source>
        <strain>cv. Columbia</strain>
        <strain>cv. Cvi-0</strain>
        <strain>cv. Wassilewskija-2</strain>
    </source>
</reference>
<feature type="chain" id="PRO_0000220437" description="Cytochrome b6-f complex subunit 6">
    <location>
        <begin position="1"/>
        <end position="31"/>
    </location>
</feature>
<feature type="transmembrane region" description="Helical" evidence="1">
    <location>
        <begin position="4"/>
        <end position="24"/>
    </location>
</feature>
<organism>
    <name type="scientific">Arabidopsis thaliana</name>
    <name type="common">Mouse-ear cress</name>
    <dbReference type="NCBI Taxonomy" id="3702"/>
    <lineage>
        <taxon>Eukaryota</taxon>
        <taxon>Viridiplantae</taxon>
        <taxon>Streptophyta</taxon>
        <taxon>Embryophyta</taxon>
        <taxon>Tracheophyta</taxon>
        <taxon>Spermatophyta</taxon>
        <taxon>Magnoliopsida</taxon>
        <taxon>eudicotyledons</taxon>
        <taxon>Gunneridae</taxon>
        <taxon>Pentapetalae</taxon>
        <taxon>rosids</taxon>
        <taxon>malvids</taxon>
        <taxon>Brassicales</taxon>
        <taxon>Brassicaceae</taxon>
        <taxon>Camelineae</taxon>
        <taxon>Arabidopsis</taxon>
    </lineage>
</organism>
<protein>
    <recommendedName>
        <fullName evidence="1">Cytochrome b6-f complex subunit 6</fullName>
    </recommendedName>
    <alternativeName>
        <fullName evidence="1">Cytochrome b6-f complex subunit PetL</fullName>
    </alternativeName>
    <alternativeName>
        <fullName evidence="1">Cytochrome b6-f complex subunit VI</fullName>
    </alternativeName>
</protein>
<sequence>MLTITSYFGFLLAALTITSVLFIGLSKIRLI</sequence>
<evidence type="ECO:0000255" key="1">
    <source>
        <dbReference type="HAMAP-Rule" id="MF_00433"/>
    </source>
</evidence>
<evidence type="ECO:0000269" key="2">
    <source>
    </source>
</evidence>
<proteinExistence type="evidence at transcript level"/>
<keyword id="KW-0150">Chloroplast</keyword>
<keyword id="KW-0249">Electron transport</keyword>
<keyword id="KW-0472">Membrane</keyword>
<keyword id="KW-0602">Photosynthesis</keyword>
<keyword id="KW-0934">Plastid</keyword>
<keyword id="KW-1185">Reference proteome</keyword>
<keyword id="KW-0691">RNA editing</keyword>
<keyword id="KW-0793">Thylakoid</keyword>
<keyword id="KW-0812">Transmembrane</keyword>
<keyword id="KW-1133">Transmembrane helix</keyword>
<keyword id="KW-0813">Transport</keyword>
<gene>
    <name evidence="1" type="primary">petL</name>
    <name type="ordered locus">AtCg00590</name>
</gene>
<dbReference type="EMBL" id="AP000423">
    <property type="protein sequence ID" value="BAA84403.1"/>
    <property type="status" value="ALT_SEQ"/>
    <property type="molecule type" value="Genomic_DNA"/>
</dbReference>
<dbReference type="EMBL" id="AJ971686">
    <property type="protein sequence ID" value="CAI99048.1"/>
    <property type="status" value="ALT_SEQ"/>
    <property type="molecule type" value="Genomic_DNA"/>
</dbReference>
<dbReference type="EMBL" id="AJ971685">
    <property type="protein sequence ID" value="CAI99046.1"/>
    <property type="status" value="ALT_SEQ"/>
    <property type="molecule type" value="Genomic_DNA"/>
</dbReference>
<dbReference type="RefSeq" id="NP_051077.1">
    <property type="nucleotide sequence ID" value="NC_000932.1"/>
</dbReference>
<dbReference type="SMR" id="P56776"/>
<dbReference type="STRING" id="3702.P56776"/>
<dbReference type="PaxDb" id="3702-ATCG00590.1"/>
<dbReference type="GeneID" id="844744"/>
<dbReference type="KEGG" id="ath:ArthCp040"/>
<dbReference type="Araport" id="ATCG00590"/>
<dbReference type="TAIR" id="ATCG00590">
    <property type="gene designation" value="ORF31"/>
</dbReference>
<dbReference type="HOGENOM" id="CLU_3371223_0_0_1"/>
<dbReference type="InParanoid" id="P56776"/>
<dbReference type="PRO" id="PR:P56776"/>
<dbReference type="Proteomes" id="UP000006548">
    <property type="component" value="Chloroplast Pltd"/>
</dbReference>
<dbReference type="GO" id="GO:0009535">
    <property type="term" value="C:chloroplast thylakoid membrane"/>
    <property type="evidence" value="ECO:0007669"/>
    <property type="project" value="UniProtKB-SubCell"/>
</dbReference>
<dbReference type="GO" id="GO:0009512">
    <property type="term" value="C:cytochrome b6f complex"/>
    <property type="evidence" value="ECO:0007669"/>
    <property type="project" value="InterPro"/>
</dbReference>
<dbReference type="GO" id="GO:0045158">
    <property type="term" value="F:electron transporter, transferring electrons within cytochrome b6/f complex of photosystem II activity"/>
    <property type="evidence" value="ECO:0007669"/>
    <property type="project" value="UniProtKB-UniRule"/>
</dbReference>
<dbReference type="GO" id="GO:0015979">
    <property type="term" value="P:photosynthesis"/>
    <property type="evidence" value="ECO:0007669"/>
    <property type="project" value="UniProtKB-KW"/>
</dbReference>
<dbReference type="HAMAP" id="MF_00433">
    <property type="entry name" value="Cytb6_f_PetL"/>
    <property type="match status" value="1"/>
</dbReference>
<dbReference type="InterPro" id="IPR007802">
    <property type="entry name" value="Cyt_b6/f_cplx_su6"/>
</dbReference>
<dbReference type="PANTHER" id="PTHR37266">
    <property type="entry name" value="CYTOCHROME B6-F COMPLEX SUBUNIT 6"/>
    <property type="match status" value="1"/>
</dbReference>
<dbReference type="PANTHER" id="PTHR37266:SF1">
    <property type="entry name" value="CYTOCHROME B6-F COMPLEX SUBUNIT 6"/>
    <property type="match status" value="1"/>
</dbReference>
<dbReference type="Pfam" id="PF05115">
    <property type="entry name" value="PetL"/>
    <property type="match status" value="1"/>
</dbReference>
<dbReference type="SUPFAM" id="SSF103436">
    <property type="entry name" value="PetL subunit of the cytochrome b6f complex"/>
    <property type="match status" value="1"/>
</dbReference>
<comment type="function">
    <text evidence="1">Component of the cytochrome b6-f complex, which mediates electron transfer between photosystem II (PSII) and photosystem I (PSI), cyclic electron flow around PSI, and state transitions. PetL is important for photoautotrophic growth as well as for electron transfer efficiency and stability of the cytochrome b6-f complex.</text>
</comment>
<comment type="subunit">
    <text evidence="1">The 4 large subunits of the cytochrome b6-f complex are cytochrome b6, subunit IV (17 kDa polypeptide, PetD), cytochrome f and the Rieske protein, while the 4 small subunits are PetG, PetL, PetM and PetN. The complex functions as a dimer.</text>
</comment>
<comment type="subcellular location">
    <subcellularLocation>
        <location evidence="1">Plastid</location>
        <location evidence="1">Chloroplast thylakoid membrane</location>
        <topology evidence="1">Single-pass membrane protein</topology>
    </subcellularLocation>
</comment>
<comment type="RNA editing">
    <location>
        <position position="2" evidence="2"/>
    </location>
</comment>
<comment type="similarity">
    <text evidence="1">Belongs to the PetL family.</text>
</comment>
<name>PETL_ARATH</name>
<accession>P56776</accession>
<accession>Q3ZVB4</accession>
<geneLocation type="chloroplast"/>